<dbReference type="EMBL" id="AB017397">
    <property type="protein sequence ID" value="BAA36813.1"/>
    <property type="molecule type" value="Genomic_DNA"/>
</dbReference>
<dbReference type="GO" id="GO:0009507">
    <property type="term" value="C:chloroplast"/>
    <property type="evidence" value="ECO:0007669"/>
    <property type="project" value="UniProtKB-SubCell"/>
</dbReference>
<dbReference type="GO" id="GO:0003723">
    <property type="term" value="F:RNA binding"/>
    <property type="evidence" value="ECO:0007669"/>
    <property type="project" value="UniProtKB-KW"/>
</dbReference>
<dbReference type="GO" id="GO:0006397">
    <property type="term" value="P:mRNA processing"/>
    <property type="evidence" value="ECO:0007669"/>
    <property type="project" value="UniProtKB-KW"/>
</dbReference>
<dbReference type="GO" id="GO:0008380">
    <property type="term" value="P:RNA splicing"/>
    <property type="evidence" value="ECO:0007669"/>
    <property type="project" value="UniProtKB-UniRule"/>
</dbReference>
<dbReference type="GO" id="GO:0008033">
    <property type="term" value="P:tRNA processing"/>
    <property type="evidence" value="ECO:0007669"/>
    <property type="project" value="UniProtKB-KW"/>
</dbReference>
<dbReference type="HAMAP" id="MF_01390">
    <property type="entry name" value="MatK"/>
    <property type="match status" value="1"/>
</dbReference>
<dbReference type="InterPro" id="IPR024937">
    <property type="entry name" value="Domain_X"/>
</dbReference>
<dbReference type="InterPro" id="IPR002866">
    <property type="entry name" value="Maturase_MatK"/>
</dbReference>
<dbReference type="InterPro" id="IPR024942">
    <property type="entry name" value="Maturase_MatK_N"/>
</dbReference>
<dbReference type="PANTHER" id="PTHR34811">
    <property type="entry name" value="MATURASE K"/>
    <property type="match status" value="1"/>
</dbReference>
<dbReference type="PANTHER" id="PTHR34811:SF1">
    <property type="entry name" value="MATURASE K"/>
    <property type="match status" value="1"/>
</dbReference>
<dbReference type="Pfam" id="PF01348">
    <property type="entry name" value="Intron_maturas2"/>
    <property type="match status" value="1"/>
</dbReference>
<dbReference type="Pfam" id="PF01824">
    <property type="entry name" value="MatK_N"/>
    <property type="match status" value="1"/>
</dbReference>
<evidence type="ECO:0000255" key="1">
    <source>
        <dbReference type="HAMAP-Rule" id="MF_01390"/>
    </source>
</evidence>
<feature type="chain" id="PRO_0000143767" description="Maturase K">
    <location>
        <begin position="1"/>
        <end position="517"/>
    </location>
</feature>
<sequence length="517" mass="61379">MEELQGYLEKDGSRQQNFLYPLIFQEYIYTLAHDHGLNSSIFYEPMEIVGLGYDNKSSSVLVKRLITRMYQQNSLIYSMNDFNQNRFVGHNNSFYSNLDSQMVSEGFAVIVEIPFSLRLVPSSEEIPKSQNLRSIHSIFPFLEDKLSHLNYVLDILIPYPIHLEILVQILQCWIQDVPSLHFLRLFLHEFHNWNNLITPTKSISVFSKENKRLFRILYNSYVSEYEFVFVFLRKQSYYLRSTSSRAFLERTHFYVKIEHLIDIDVCHNHFQKILWFFKDSFMHYVRYKGKAILASRGTYLLIKKWKCYLVNFWQYNFHFWSKPYRIHINPFSNYSFYFLGYISSVLINPSAVKNQMLENFYLVDTLTQKFDTIVPVIPLIGSLSKAKFCTILGHPISKPIWAELSDSDIIDRFGRICRNLSHYHSGSSKKQSLYRIKYILRLSCARTLARKHKSTVRNLLQRLGSGLLEEFFTEEEQVISPIFPKTTLFPLHGSHKERIWYLDIIRINDLANYLDWS</sequence>
<geneLocation type="chloroplast"/>
<keyword id="KW-0150">Chloroplast</keyword>
<keyword id="KW-0507">mRNA processing</keyword>
<keyword id="KW-0934">Plastid</keyword>
<keyword id="KW-0694">RNA-binding</keyword>
<keyword id="KW-0819">tRNA processing</keyword>
<gene>
    <name evidence="1" type="primary">matK</name>
</gene>
<organism>
    <name type="scientific">Trillium maculatum</name>
    <name type="common">Spotted wakerobin</name>
    <dbReference type="NCBI Taxonomy" id="82490"/>
    <lineage>
        <taxon>Eukaryota</taxon>
        <taxon>Viridiplantae</taxon>
        <taxon>Streptophyta</taxon>
        <taxon>Embryophyta</taxon>
        <taxon>Tracheophyta</taxon>
        <taxon>Spermatophyta</taxon>
        <taxon>Magnoliopsida</taxon>
        <taxon>Liliopsida</taxon>
        <taxon>Liliales</taxon>
        <taxon>Melanthiaceae</taxon>
        <taxon>Trillium</taxon>
    </lineage>
</organism>
<protein>
    <recommendedName>
        <fullName evidence="1">Maturase K</fullName>
    </recommendedName>
    <alternativeName>
        <fullName evidence="1">Intron maturase</fullName>
    </alternativeName>
</protein>
<reference key="1">
    <citation type="journal article" date="1999" name="J. Plant Res.">
        <title>Molecular systematics of Trilliaceae I. Phylogenetic analyses of Trillium using matK gene sequences.</title>
        <authorList>
            <person name="Kazempour Osaloo S."/>
            <person name="Utech F.H."/>
            <person name="Ohara M."/>
            <person name="Kawano S."/>
        </authorList>
    </citation>
    <scope>NUCLEOTIDE SEQUENCE [GENOMIC DNA]</scope>
    <source>
        <tissue>Leaf</tissue>
    </source>
</reference>
<accession>Q9XPP1</accession>
<comment type="function">
    <text evidence="1">Usually encoded in the trnK tRNA gene intron. Probably assists in splicing its own and other chloroplast group II introns.</text>
</comment>
<comment type="subcellular location">
    <subcellularLocation>
        <location>Plastid</location>
        <location>Chloroplast</location>
    </subcellularLocation>
</comment>
<comment type="similarity">
    <text evidence="1">Belongs to the intron maturase 2 family. MatK subfamily.</text>
</comment>
<name>MATK_TRIMC</name>
<proteinExistence type="inferred from homology"/>